<feature type="chain" id="PRO_0000302239" description="Large ribosomal subunit protein bL36">
    <location>
        <begin position="1"/>
        <end position="37"/>
    </location>
</feature>
<name>RL36_METPP</name>
<comment type="similarity">
    <text evidence="1">Belongs to the bacterial ribosomal protein bL36 family.</text>
</comment>
<organism>
    <name type="scientific">Methylibium petroleiphilum (strain ATCC BAA-1232 / LMG 22953 / PM1)</name>
    <dbReference type="NCBI Taxonomy" id="420662"/>
    <lineage>
        <taxon>Bacteria</taxon>
        <taxon>Pseudomonadati</taxon>
        <taxon>Pseudomonadota</taxon>
        <taxon>Betaproteobacteria</taxon>
        <taxon>Burkholderiales</taxon>
        <taxon>Sphaerotilaceae</taxon>
        <taxon>Methylibium</taxon>
    </lineage>
</organism>
<sequence length="37" mass="4281">MKVAASVKKMCRNCKVIRRKGVVRVICTDPRHKQRQG</sequence>
<proteinExistence type="inferred from homology"/>
<keyword id="KW-1185">Reference proteome</keyword>
<keyword id="KW-0687">Ribonucleoprotein</keyword>
<keyword id="KW-0689">Ribosomal protein</keyword>
<protein>
    <recommendedName>
        <fullName evidence="1">Large ribosomal subunit protein bL36</fullName>
    </recommendedName>
    <alternativeName>
        <fullName evidence="2">50S ribosomal protein L36</fullName>
    </alternativeName>
</protein>
<reference key="1">
    <citation type="journal article" date="2007" name="J. Bacteriol.">
        <title>Whole-genome analysis of the methyl tert-butyl ether-degrading beta-proteobacterium Methylibium petroleiphilum PM1.</title>
        <authorList>
            <person name="Kane S.R."/>
            <person name="Chakicherla A.Y."/>
            <person name="Chain P.S.G."/>
            <person name="Schmidt R."/>
            <person name="Shin M.W."/>
            <person name="Legler T.C."/>
            <person name="Scow K.M."/>
            <person name="Larimer F.W."/>
            <person name="Lucas S.M."/>
            <person name="Richardson P.M."/>
            <person name="Hristova K.R."/>
        </authorList>
    </citation>
    <scope>NUCLEOTIDE SEQUENCE [LARGE SCALE GENOMIC DNA]</scope>
    <source>
        <strain>ATCC BAA-1232 / LMG 22953 / PM1</strain>
    </source>
</reference>
<gene>
    <name evidence="1" type="primary">rpmJ</name>
    <name type="ordered locus">Mpe_A3421</name>
</gene>
<evidence type="ECO:0000255" key="1">
    <source>
        <dbReference type="HAMAP-Rule" id="MF_00251"/>
    </source>
</evidence>
<evidence type="ECO:0000305" key="2"/>
<accession>A2SLD5</accession>
<dbReference type="EMBL" id="CP000555">
    <property type="protein sequence ID" value="ABM96374.1"/>
    <property type="molecule type" value="Genomic_DNA"/>
</dbReference>
<dbReference type="RefSeq" id="WP_011830995.1">
    <property type="nucleotide sequence ID" value="NC_008825.1"/>
</dbReference>
<dbReference type="SMR" id="A2SLD5"/>
<dbReference type="STRING" id="420662.Mpe_A3421"/>
<dbReference type="KEGG" id="mpt:Mpe_A3421"/>
<dbReference type="eggNOG" id="COG0257">
    <property type="taxonomic scope" value="Bacteria"/>
</dbReference>
<dbReference type="HOGENOM" id="CLU_135723_6_2_4"/>
<dbReference type="Proteomes" id="UP000000366">
    <property type="component" value="Chromosome"/>
</dbReference>
<dbReference type="GO" id="GO:0005737">
    <property type="term" value="C:cytoplasm"/>
    <property type="evidence" value="ECO:0007669"/>
    <property type="project" value="UniProtKB-ARBA"/>
</dbReference>
<dbReference type="GO" id="GO:1990904">
    <property type="term" value="C:ribonucleoprotein complex"/>
    <property type="evidence" value="ECO:0007669"/>
    <property type="project" value="UniProtKB-KW"/>
</dbReference>
<dbReference type="GO" id="GO:0005840">
    <property type="term" value="C:ribosome"/>
    <property type="evidence" value="ECO:0007669"/>
    <property type="project" value="UniProtKB-KW"/>
</dbReference>
<dbReference type="GO" id="GO:0003735">
    <property type="term" value="F:structural constituent of ribosome"/>
    <property type="evidence" value="ECO:0007669"/>
    <property type="project" value="InterPro"/>
</dbReference>
<dbReference type="GO" id="GO:0006412">
    <property type="term" value="P:translation"/>
    <property type="evidence" value="ECO:0007669"/>
    <property type="project" value="UniProtKB-UniRule"/>
</dbReference>
<dbReference type="HAMAP" id="MF_00251">
    <property type="entry name" value="Ribosomal_bL36"/>
    <property type="match status" value="1"/>
</dbReference>
<dbReference type="InterPro" id="IPR000473">
    <property type="entry name" value="Ribosomal_bL36"/>
</dbReference>
<dbReference type="InterPro" id="IPR035977">
    <property type="entry name" value="Ribosomal_bL36_sp"/>
</dbReference>
<dbReference type="NCBIfam" id="TIGR01022">
    <property type="entry name" value="rpmJ_bact"/>
    <property type="match status" value="1"/>
</dbReference>
<dbReference type="PANTHER" id="PTHR42888">
    <property type="entry name" value="50S RIBOSOMAL PROTEIN L36, CHLOROPLASTIC"/>
    <property type="match status" value="1"/>
</dbReference>
<dbReference type="PANTHER" id="PTHR42888:SF1">
    <property type="entry name" value="LARGE RIBOSOMAL SUBUNIT PROTEIN BL36C"/>
    <property type="match status" value="1"/>
</dbReference>
<dbReference type="Pfam" id="PF00444">
    <property type="entry name" value="Ribosomal_L36"/>
    <property type="match status" value="1"/>
</dbReference>
<dbReference type="SUPFAM" id="SSF57840">
    <property type="entry name" value="Ribosomal protein L36"/>
    <property type="match status" value="1"/>
</dbReference>
<dbReference type="PROSITE" id="PS00828">
    <property type="entry name" value="RIBOSOMAL_L36"/>
    <property type="match status" value="1"/>
</dbReference>